<feature type="chain" id="PRO_0000431272" description="ERAD-associated E3 ubiquitin-protein ligase HRD1">
    <location>
        <begin position="1"/>
        <end position="500"/>
    </location>
</feature>
<feature type="topological domain" description="Cytoplasmic" evidence="5">
    <location>
        <begin position="1"/>
        <end position="3"/>
    </location>
</feature>
<feature type="transmembrane region" description="Helical; Name=1" evidence="2">
    <location>
        <begin position="4"/>
        <end position="24"/>
    </location>
</feature>
<feature type="topological domain" description="Lumenal" evidence="5">
    <location>
        <begin position="25"/>
        <end position="40"/>
    </location>
</feature>
<feature type="transmembrane region" description="Helical; Name=2" evidence="2">
    <location>
        <begin position="41"/>
        <end position="61"/>
    </location>
</feature>
<feature type="topological domain" description="Cytoplasmic" evidence="5">
    <location>
        <begin position="62"/>
        <end position="98"/>
    </location>
</feature>
<feature type="transmembrane region" description="Helical; Name=3" evidence="2">
    <location>
        <begin position="99"/>
        <end position="119"/>
    </location>
</feature>
<feature type="topological domain" description="Lumenal" evidence="5">
    <location>
        <begin position="120"/>
        <end position="135"/>
    </location>
</feature>
<feature type="transmembrane region" description="Helical; Name=4" evidence="2">
    <location>
        <begin position="136"/>
        <end position="156"/>
    </location>
</feature>
<feature type="topological domain" description="Cytoplasmic" evidence="5">
    <location>
        <begin position="157"/>
        <end position="170"/>
    </location>
</feature>
<feature type="transmembrane region" description="Helical; Name=5" evidence="2">
    <location>
        <begin position="171"/>
        <end position="191"/>
    </location>
</feature>
<feature type="topological domain" description="Lumenal" evidence="5">
    <location>
        <begin position="192"/>
        <end position="225"/>
    </location>
</feature>
<feature type="transmembrane region" description="Helical; Name=6" evidence="2">
    <location>
        <begin position="226"/>
        <end position="246"/>
    </location>
</feature>
<feature type="topological domain" description="Cytoplasmic" evidence="5">
    <location>
        <begin position="247"/>
        <end position="500"/>
    </location>
</feature>
<feature type="zinc finger region" description="RING-type; atypical" evidence="3">
    <location>
        <begin position="292"/>
        <end position="330"/>
    </location>
</feature>
<feature type="region of interest" description="Disordered" evidence="4">
    <location>
        <begin position="337"/>
        <end position="375"/>
    </location>
</feature>
<feature type="region of interest" description="Disordered" evidence="4">
    <location>
        <begin position="398"/>
        <end position="438"/>
    </location>
</feature>
<feature type="compositionally biased region" description="Low complexity" evidence="4">
    <location>
        <begin position="348"/>
        <end position="358"/>
    </location>
</feature>
<feature type="compositionally biased region" description="Polar residues" evidence="4">
    <location>
        <begin position="398"/>
        <end position="426"/>
    </location>
</feature>
<gene>
    <name evidence="5" type="primary">HRD1</name>
    <name evidence="8" type="ordered locus">Os06g0301000</name>
    <name evidence="5" type="ordered locus">LOC_Os06g19680</name>
    <name evidence="7" type="ORF">OJ1217_C01.4</name>
    <name evidence="6" type="ORF">P0501G08.42</name>
</gene>
<organism evidence="9">
    <name type="scientific">Oryza sativa subsp. japonica</name>
    <name type="common">Rice</name>
    <dbReference type="NCBI Taxonomy" id="39947"/>
    <lineage>
        <taxon>Eukaryota</taxon>
        <taxon>Viridiplantae</taxon>
        <taxon>Streptophyta</taxon>
        <taxon>Embryophyta</taxon>
        <taxon>Tracheophyta</taxon>
        <taxon>Spermatophyta</taxon>
        <taxon>Magnoliopsida</taxon>
        <taxon>Liliopsida</taxon>
        <taxon>Poales</taxon>
        <taxon>Poaceae</taxon>
        <taxon>BOP clade</taxon>
        <taxon>Oryzoideae</taxon>
        <taxon>Oryzeae</taxon>
        <taxon>Oryzinae</taxon>
        <taxon>Oryza</taxon>
        <taxon>Oryza sativa</taxon>
    </lineage>
</organism>
<comment type="function">
    <text evidence="1">Probable component of the HRD1 ubiquitin ligase complex that mediates the rapid degradation of misfolded endoplasmic reticulum (ER) proteins, a process called ER-associated degradation (ERAD).</text>
</comment>
<comment type="catalytic activity">
    <reaction evidence="5">
        <text>S-ubiquitinyl-[E2 ubiquitin-conjugating enzyme]-L-cysteine + [acceptor protein]-L-lysine = [E2 ubiquitin-conjugating enzyme]-L-cysteine + N(6)-ubiquitinyl-[acceptor protein]-L-lysine.</text>
        <dbReference type="EC" id="2.3.2.27"/>
    </reaction>
</comment>
<comment type="pathway">
    <text evidence="5">Protein modification; protein ubiquitination.</text>
</comment>
<comment type="subcellular location">
    <subcellularLocation>
        <location evidence="5">Endoplasmic reticulum membrane</location>
        <topology evidence="2">Multi-pass membrane protein</topology>
    </subcellularLocation>
</comment>
<comment type="similarity">
    <text evidence="5">Belongs to the HRD1 family.</text>
</comment>
<reference key="1">
    <citation type="journal article" date="2005" name="Nature">
        <title>The map-based sequence of the rice genome.</title>
        <authorList>
            <consortium name="International rice genome sequencing project (IRGSP)"/>
        </authorList>
    </citation>
    <scope>NUCLEOTIDE SEQUENCE [LARGE SCALE GENOMIC DNA]</scope>
    <scope>G</scope>
    <source>
        <strain>cv. Nipponbare</strain>
    </source>
</reference>
<reference key="2">
    <citation type="journal article" date="2008" name="Nucleic Acids Res.">
        <title>The rice annotation project database (RAP-DB): 2008 update.</title>
        <authorList>
            <consortium name="The rice annotation project (RAP)"/>
        </authorList>
    </citation>
    <scope>GENOME REANNOTATION</scope>
    <source>
        <strain>cv. Nipponbare</strain>
    </source>
</reference>
<reference key="3">
    <citation type="journal article" date="2013" name="Rice">
        <title>Improvement of the Oryza sativa Nipponbare reference genome using next generation sequence and optical map data.</title>
        <authorList>
            <person name="Kawahara Y."/>
            <person name="de la Bastide M."/>
            <person name="Hamilton J.P."/>
            <person name="Kanamori H."/>
            <person name="McCombie W.R."/>
            <person name="Ouyang S."/>
            <person name="Schwartz D.C."/>
            <person name="Tanaka T."/>
            <person name="Wu J."/>
            <person name="Zhou S."/>
            <person name="Childs K.L."/>
            <person name="Davidson R.M."/>
            <person name="Lin H."/>
            <person name="Quesada-Ocampo L."/>
            <person name="Vaillancourt B."/>
            <person name="Sakai H."/>
            <person name="Lee S.S."/>
            <person name="Kim J."/>
            <person name="Numa H."/>
            <person name="Itoh T."/>
            <person name="Buell C.R."/>
            <person name="Matsumoto T."/>
        </authorList>
    </citation>
    <scope>GENOME REANNOTATION</scope>
    <source>
        <strain>cv. Nipponbare</strain>
    </source>
</reference>
<reference key="4">
    <citation type="journal article" date="2003" name="Science">
        <title>Collection, mapping, and annotation of over 28,000 cDNA clones from japonica rice.</title>
        <authorList>
            <consortium name="The rice full-length cDNA consortium"/>
        </authorList>
    </citation>
    <scope>NUCLEOTIDE SEQUENCE [LARGE SCALE MRNA]</scope>
    <source>
        <strain>cv. Nipponbare</strain>
    </source>
</reference>
<sequence>MIRLQTYAAFSLMATATAVYYAFSSREQFYPAMVYLSTSKICFVLLLNTGLVAMCVAWQLVKRLFLGTLREAEVERLNEQAWREVVEILFAVTIFRQDFSVSFLAMVAALLLVKALHWLAQKRVEYIETTPSVPMLSHARIVSFMLFLLVVDCLFLSNSLRSLIHKREASVAIFFSFEYMILATSTVSTFVKYIFYVSDMLMEGQWEKKAVYTFYLELISDLVHLSLYMLFFIAIFLNYGVPLHLIRELYETFRNFRIRIADYVRYRKITSNMNERFPDATADELNASDATCIICREEMTTAKKLLCGHLFHVHCLRSWLERQHTCPTCRAPILPPDNGRTAARPHGVHPGVQPVPGNGTPGSERAAGENISRRQAKLEAAASAASLYGRSFAYPPANNLNRYSTPPQSTSNGPQSGEASTSNQSPKGHATADPSAPTFYARGAVSSVTTTRELESSLQKAYENAIKSQIEMLQIQLQMFQHGATSSATNNENGEHTKSD</sequence>
<proteinExistence type="evidence at transcript level"/>
<keyword id="KW-0256">Endoplasmic reticulum</keyword>
<keyword id="KW-0472">Membrane</keyword>
<keyword id="KW-0479">Metal-binding</keyword>
<keyword id="KW-1185">Reference proteome</keyword>
<keyword id="KW-0808">Transferase</keyword>
<keyword id="KW-0812">Transmembrane</keyword>
<keyword id="KW-1133">Transmembrane helix</keyword>
<keyword id="KW-0833">Ubl conjugation pathway</keyword>
<keyword id="KW-0862">Zinc</keyword>
<keyword id="KW-0863">Zinc-finger</keyword>
<name>HRD1_ORYSJ</name>
<evidence type="ECO:0000250" key="1">
    <source>
        <dbReference type="UniProtKB" id="Q9LW77"/>
    </source>
</evidence>
<evidence type="ECO:0000255" key="2"/>
<evidence type="ECO:0000255" key="3">
    <source>
        <dbReference type="PROSITE-ProRule" id="PRU00175"/>
    </source>
</evidence>
<evidence type="ECO:0000256" key="4">
    <source>
        <dbReference type="SAM" id="MobiDB-lite"/>
    </source>
</evidence>
<evidence type="ECO:0000305" key="5"/>
<evidence type="ECO:0000312" key="6">
    <source>
        <dbReference type="EMBL" id="BAD53494.1"/>
    </source>
</evidence>
<evidence type="ECO:0000312" key="7">
    <source>
        <dbReference type="EMBL" id="BAD53976.1"/>
    </source>
</evidence>
<evidence type="ECO:0000312" key="8">
    <source>
        <dbReference type="EMBL" id="BAF19368.1"/>
    </source>
</evidence>
<evidence type="ECO:0000312" key="9">
    <source>
        <dbReference type="Proteomes" id="UP000059680"/>
    </source>
</evidence>
<protein>
    <recommendedName>
        <fullName evidence="5">ERAD-associated E3 ubiquitin-protein ligase HRD1</fullName>
        <ecNumber evidence="5">2.3.2.27</ecNumber>
    </recommendedName>
    <alternativeName>
        <fullName evidence="5">RING-type E3 ubiquitin transferase HRD1</fullName>
    </alternativeName>
</protein>
<dbReference type="EC" id="2.3.2.27" evidence="5"/>
<dbReference type="EMBL" id="AP003524">
    <property type="protein sequence ID" value="BAD53494.1"/>
    <property type="molecule type" value="Genomic_DNA"/>
</dbReference>
<dbReference type="EMBL" id="AP004007">
    <property type="protein sequence ID" value="BAD53976.1"/>
    <property type="molecule type" value="Genomic_DNA"/>
</dbReference>
<dbReference type="EMBL" id="AP008212">
    <property type="protein sequence ID" value="BAF19368.1"/>
    <property type="molecule type" value="Genomic_DNA"/>
</dbReference>
<dbReference type="EMBL" id="AP014962">
    <property type="protein sequence ID" value="BAS97382.1"/>
    <property type="molecule type" value="Genomic_DNA"/>
</dbReference>
<dbReference type="EMBL" id="AK073960">
    <property type="protein sequence ID" value="BAG93732.1"/>
    <property type="molecule type" value="mRNA"/>
</dbReference>
<dbReference type="RefSeq" id="XP_015644046.1">
    <property type="nucleotide sequence ID" value="XM_015788560.1"/>
</dbReference>
<dbReference type="SMR" id="Q5Z880"/>
<dbReference type="FunCoup" id="Q5Z880">
    <property type="interactions" value="1887"/>
</dbReference>
<dbReference type="STRING" id="39947.Q5Z880"/>
<dbReference type="PaxDb" id="39947-Q5Z880"/>
<dbReference type="EnsemblPlants" id="Os06t0301000-01">
    <property type="protein sequence ID" value="Os06t0301000-01"/>
    <property type="gene ID" value="Os06g0301000"/>
</dbReference>
<dbReference type="Gramene" id="Os06t0301000-01">
    <property type="protein sequence ID" value="Os06t0301000-01"/>
    <property type="gene ID" value="Os06g0301000"/>
</dbReference>
<dbReference type="KEGG" id="dosa:Os06g0301000"/>
<dbReference type="eggNOG" id="KOG0802">
    <property type="taxonomic scope" value="Eukaryota"/>
</dbReference>
<dbReference type="HOGENOM" id="CLU_009169_4_1_1"/>
<dbReference type="InParanoid" id="Q5Z880"/>
<dbReference type="OMA" id="ANLTMFT"/>
<dbReference type="OrthoDB" id="7759664at2759"/>
<dbReference type="UniPathway" id="UPA00143"/>
<dbReference type="Proteomes" id="UP000000763">
    <property type="component" value="Chromosome 6"/>
</dbReference>
<dbReference type="Proteomes" id="UP000059680">
    <property type="component" value="Chromosome 6"/>
</dbReference>
<dbReference type="GO" id="GO:0012505">
    <property type="term" value="C:endomembrane system"/>
    <property type="evidence" value="ECO:0000318"/>
    <property type="project" value="GO_Central"/>
</dbReference>
<dbReference type="GO" id="GO:0005789">
    <property type="term" value="C:endoplasmic reticulum membrane"/>
    <property type="evidence" value="ECO:0007669"/>
    <property type="project" value="UniProtKB-SubCell"/>
</dbReference>
<dbReference type="GO" id="GO:0061630">
    <property type="term" value="F:ubiquitin protein ligase activity"/>
    <property type="evidence" value="ECO:0000318"/>
    <property type="project" value="GO_Central"/>
</dbReference>
<dbReference type="GO" id="GO:0008270">
    <property type="term" value="F:zinc ion binding"/>
    <property type="evidence" value="ECO:0007669"/>
    <property type="project" value="UniProtKB-KW"/>
</dbReference>
<dbReference type="GO" id="GO:0036503">
    <property type="term" value="P:ERAD pathway"/>
    <property type="evidence" value="ECO:0000318"/>
    <property type="project" value="GO_Central"/>
</dbReference>
<dbReference type="GO" id="GO:0043161">
    <property type="term" value="P:proteasome-mediated ubiquitin-dependent protein catabolic process"/>
    <property type="evidence" value="ECO:0000318"/>
    <property type="project" value="GO_Central"/>
</dbReference>
<dbReference type="GO" id="GO:0016567">
    <property type="term" value="P:protein ubiquitination"/>
    <property type="evidence" value="ECO:0007669"/>
    <property type="project" value="UniProtKB-UniPathway"/>
</dbReference>
<dbReference type="CDD" id="cd16479">
    <property type="entry name" value="RING-H2_synoviolin"/>
    <property type="match status" value="1"/>
</dbReference>
<dbReference type="FunFam" id="3.30.40.10:FF:000194">
    <property type="entry name" value="ERAD-associated E3 ubiquitin-protein ligase HRD1A"/>
    <property type="match status" value="1"/>
</dbReference>
<dbReference type="Gene3D" id="3.30.40.10">
    <property type="entry name" value="Zinc/RING finger domain, C3HC4 (zinc finger)"/>
    <property type="match status" value="1"/>
</dbReference>
<dbReference type="InterPro" id="IPR050731">
    <property type="entry name" value="HRD1_E3_ubiq-ligases"/>
</dbReference>
<dbReference type="InterPro" id="IPR001841">
    <property type="entry name" value="Znf_RING"/>
</dbReference>
<dbReference type="InterPro" id="IPR013083">
    <property type="entry name" value="Znf_RING/FYVE/PHD"/>
</dbReference>
<dbReference type="PANTHER" id="PTHR22763:SF184">
    <property type="entry name" value="E3 UBIQUITIN-PROTEIN LIGASE SYNOVIOLIN"/>
    <property type="match status" value="1"/>
</dbReference>
<dbReference type="PANTHER" id="PTHR22763">
    <property type="entry name" value="RING ZINC FINGER PROTEIN"/>
    <property type="match status" value="1"/>
</dbReference>
<dbReference type="Pfam" id="PF13639">
    <property type="entry name" value="zf-RING_2"/>
    <property type="match status" value="1"/>
</dbReference>
<dbReference type="SMART" id="SM00184">
    <property type="entry name" value="RING"/>
    <property type="match status" value="1"/>
</dbReference>
<dbReference type="SUPFAM" id="SSF57850">
    <property type="entry name" value="RING/U-box"/>
    <property type="match status" value="1"/>
</dbReference>
<dbReference type="PROSITE" id="PS50089">
    <property type="entry name" value="ZF_RING_2"/>
    <property type="match status" value="1"/>
</dbReference>
<accession>Q5Z880</accession>
<accession>A0A0P0WVN5</accession>